<comment type="function">
    <text evidence="3 4">Promotes AHA1 plasma membrane ATPase activity by binding to a site different from the 14-3-3 binding site.</text>
</comment>
<comment type="subunit">
    <text evidence="3 4">Interacts with AHA1 via N-terminal region.</text>
</comment>
<comment type="interaction">
    <interactant intactId="EBI-2354477">
        <id>O23144</id>
    </interactant>
    <interactant intactId="EBI-2354448">
        <id>P20649</id>
        <label>AHA1</label>
    </interactant>
    <organismsDiffer>false</organismsDiffer>
    <experiments>7</experiments>
</comment>
<comment type="subcellular location">
    <subcellularLocation>
        <location evidence="6">Cell membrane</location>
        <topology evidence="1">Single-pass membrane protein</topology>
    </subcellularLocation>
    <subcellularLocation>
        <location evidence="6">Endoplasmic reticulum membrane</location>
        <topology evidence="1">Single-pass membrane protein</topology>
    </subcellularLocation>
</comment>
<comment type="tissue specificity">
    <text evidence="5">Strongly expressed in root and shoot vascular systems, particularly in meristematic and sink tissues. Also present in pollen, stigmas and siliques, but not in developing embryos.</text>
</comment>
<comment type="similarity">
    <text evidence="7">Belongs to the plant Proton pump-interactor protein family.</text>
</comment>
<comment type="sequence caution" evidence="7">
    <conflict type="erroneous gene model prediction">
        <sequence resource="EMBL-CDS" id="CAB43882"/>
    </conflict>
</comment>
<comment type="sequence caution" evidence="7">
    <conflict type="erroneous gene model prediction">
        <sequence resource="EMBL-CDS" id="CAB81400"/>
    </conflict>
</comment>
<sequence>MGVEVVNSGGFEVAPAPFEGKPEKNGKLDQGKGDDAPINFGSVGELPKNAEENNNKVVNSDAPKNAAEEWPVAKQIHSFYLVKYRSYADPKIKAKLDLADKELEKLNKARTGVLDKLRAKRAERSELFDLLDPLKSERKGFNTMFDEKRKEMEPLQQALGKLRSNDGGSARGPAICSSEEELNSMIYSYQYRIQHESIPLTEEKQILKEIRLLEGTRDKVIANAAMRAKIKESMGQKDDIQGQVKLMGAGLDGVKKERQAISARINELSEKLKATKDEITVLENELKTVSEKRDKAYSNIHDLRRQRDETNSEYYQNRTVLNKARDLAAQKNISELEALANAEVEKFISLWCSKKNFREDYEKRILQSLDSRQLSRDGRMRNPDEKPLIAPEAAPSKATPSETEVVPKAKAKPQPKEEPVSAPKPDATVAQNTEKAKDAVKVKNVADDDDDEVYGLGKPQKEEKPVDAATAKEMRKQEEIAKAKQAMERKKKLAEKAAAKAAIRAQKEAEKKEKKEQEKKAKKKTGGNTETETEEVPEASEEEIEAPVQEEKPQKEKVFKEKPIRNRTRGRGPETIPRAILKRKKSTNYWVYAAPAALVVLLLLVLGYYYVL</sequence>
<feature type="chain" id="PRO_0000420212" description="Proton pump-interactor 1">
    <location>
        <begin position="1"/>
        <end position="612"/>
    </location>
</feature>
<feature type="transmembrane region" description="Helical" evidence="1">
    <location>
        <begin position="591"/>
        <end position="611"/>
    </location>
</feature>
<feature type="region of interest" description="Disordered" evidence="2">
    <location>
        <begin position="1"/>
        <end position="58"/>
    </location>
</feature>
<feature type="region of interest" description="Disordered" evidence="2">
    <location>
        <begin position="374"/>
        <end position="572"/>
    </location>
</feature>
<feature type="coiled-coil region" evidence="1">
    <location>
        <begin position="90"/>
        <end position="113"/>
    </location>
</feature>
<feature type="coiled-coil region" evidence="1">
    <location>
        <begin position="251"/>
        <end position="314"/>
    </location>
</feature>
<feature type="coiled-coil region" evidence="1">
    <location>
        <begin position="466"/>
        <end position="526"/>
    </location>
</feature>
<feature type="compositionally biased region" description="Basic and acidic residues" evidence="2">
    <location>
        <begin position="20"/>
        <end position="35"/>
    </location>
</feature>
<feature type="compositionally biased region" description="Basic and acidic residues" evidence="2">
    <location>
        <begin position="374"/>
        <end position="387"/>
    </location>
</feature>
<feature type="compositionally biased region" description="Basic and acidic residues" evidence="2">
    <location>
        <begin position="434"/>
        <end position="446"/>
    </location>
</feature>
<feature type="compositionally biased region" description="Basic and acidic residues" evidence="2">
    <location>
        <begin position="459"/>
        <end position="498"/>
    </location>
</feature>
<feature type="compositionally biased region" description="Basic and acidic residues" evidence="2">
    <location>
        <begin position="505"/>
        <end position="519"/>
    </location>
</feature>
<feature type="compositionally biased region" description="Acidic residues" evidence="2">
    <location>
        <begin position="531"/>
        <end position="545"/>
    </location>
</feature>
<feature type="compositionally biased region" description="Basic and acidic residues" evidence="2">
    <location>
        <begin position="549"/>
        <end position="564"/>
    </location>
</feature>
<feature type="modified residue" description="Phosphoserine" evidence="8">
    <location>
        <position position="540"/>
    </location>
</feature>
<feature type="sequence conflict" description="In Ref. 5; BAH19433." evidence="7" ref="5">
    <original>D</original>
    <variation>E</variation>
    <location>
        <position position="326"/>
    </location>
</feature>
<keyword id="KW-1003">Cell membrane</keyword>
<keyword id="KW-0175">Coiled coil</keyword>
<keyword id="KW-0256">Endoplasmic reticulum</keyword>
<keyword id="KW-0472">Membrane</keyword>
<keyword id="KW-0597">Phosphoprotein</keyword>
<keyword id="KW-1185">Reference proteome</keyword>
<keyword id="KW-0812">Transmembrane</keyword>
<keyword id="KW-1133">Transmembrane helix</keyword>
<accession>O23144</accession>
<accession>B9DFB6</accession>
<accession>Q9SZS5</accession>
<dbReference type="EMBL" id="AJ002020">
    <property type="protein sequence ID" value="CAA05145.2"/>
    <property type="molecule type" value="mRNA"/>
</dbReference>
<dbReference type="EMBL" id="AL078467">
    <property type="protein sequence ID" value="CAB43882.1"/>
    <property type="status" value="ALT_SEQ"/>
    <property type="molecule type" value="Genomic_DNA"/>
</dbReference>
<dbReference type="EMBL" id="AL161571">
    <property type="protein sequence ID" value="CAB81400.1"/>
    <property type="status" value="ALT_SEQ"/>
    <property type="molecule type" value="Genomic_DNA"/>
</dbReference>
<dbReference type="EMBL" id="CP002687">
    <property type="protein sequence ID" value="AEE85350.1"/>
    <property type="molecule type" value="Genomic_DNA"/>
</dbReference>
<dbReference type="EMBL" id="AY050365">
    <property type="protein sequence ID" value="AAK91382.1"/>
    <property type="molecule type" value="mRNA"/>
</dbReference>
<dbReference type="EMBL" id="AY143914">
    <property type="protein sequence ID" value="AAN28853.1"/>
    <property type="molecule type" value="mRNA"/>
</dbReference>
<dbReference type="EMBL" id="AK316706">
    <property type="protein sequence ID" value="BAH19433.1"/>
    <property type="molecule type" value="mRNA"/>
</dbReference>
<dbReference type="PIR" id="T08942">
    <property type="entry name" value="T08942"/>
</dbReference>
<dbReference type="RefSeq" id="NP_194480.2">
    <property type="nucleotide sequence ID" value="NM_118885.4"/>
</dbReference>
<dbReference type="SMR" id="O23144"/>
<dbReference type="BioGRID" id="14146">
    <property type="interactions" value="9"/>
</dbReference>
<dbReference type="FunCoup" id="O23144">
    <property type="interactions" value="760"/>
</dbReference>
<dbReference type="IntAct" id="O23144">
    <property type="interactions" value="1"/>
</dbReference>
<dbReference type="STRING" id="3702.O23144"/>
<dbReference type="GlyGen" id="O23144">
    <property type="glycosylation" value="1 site"/>
</dbReference>
<dbReference type="iPTMnet" id="O23144"/>
<dbReference type="PaxDb" id="3702-AT4G27500.1"/>
<dbReference type="ProMEX" id="O23144"/>
<dbReference type="ProteomicsDB" id="249345"/>
<dbReference type="EnsemblPlants" id="AT4G27500.1">
    <property type="protein sequence ID" value="AT4G27500.1"/>
    <property type="gene ID" value="AT4G27500"/>
</dbReference>
<dbReference type="GeneID" id="828859"/>
<dbReference type="Gramene" id="AT4G27500.1">
    <property type="protein sequence ID" value="AT4G27500.1"/>
    <property type="gene ID" value="AT4G27500"/>
</dbReference>
<dbReference type="KEGG" id="ath:AT4G27500"/>
<dbReference type="Araport" id="AT4G27500"/>
<dbReference type="TAIR" id="AT4G27500">
    <property type="gene designation" value="PPI1"/>
</dbReference>
<dbReference type="eggNOG" id="ENOG502QQX1">
    <property type="taxonomic scope" value="Eukaryota"/>
</dbReference>
<dbReference type="HOGENOM" id="CLU_018947_1_0_1"/>
<dbReference type="InParanoid" id="O23144"/>
<dbReference type="OMA" id="HESIELK"/>
<dbReference type="PhylomeDB" id="O23144"/>
<dbReference type="CD-CODE" id="4299E36E">
    <property type="entry name" value="Nucleolus"/>
</dbReference>
<dbReference type="PRO" id="PR:O23144"/>
<dbReference type="Proteomes" id="UP000006548">
    <property type="component" value="Chromosome 4"/>
</dbReference>
<dbReference type="ExpressionAtlas" id="O23144">
    <property type="expression patterns" value="baseline and differential"/>
</dbReference>
<dbReference type="GO" id="GO:0005829">
    <property type="term" value="C:cytosol"/>
    <property type="evidence" value="ECO:0007005"/>
    <property type="project" value="TAIR"/>
</dbReference>
<dbReference type="GO" id="GO:0005783">
    <property type="term" value="C:endoplasmic reticulum"/>
    <property type="evidence" value="ECO:0007005"/>
    <property type="project" value="TAIR"/>
</dbReference>
<dbReference type="GO" id="GO:0005789">
    <property type="term" value="C:endoplasmic reticulum membrane"/>
    <property type="evidence" value="ECO:0000314"/>
    <property type="project" value="UniProtKB"/>
</dbReference>
<dbReference type="GO" id="GO:0005886">
    <property type="term" value="C:plasma membrane"/>
    <property type="evidence" value="ECO:0000314"/>
    <property type="project" value="UniProtKB"/>
</dbReference>
<dbReference type="GO" id="GO:0009506">
    <property type="term" value="C:plasmodesma"/>
    <property type="evidence" value="ECO:0007005"/>
    <property type="project" value="TAIR"/>
</dbReference>
<dbReference type="GO" id="GO:0003729">
    <property type="term" value="F:mRNA binding"/>
    <property type="evidence" value="ECO:0000314"/>
    <property type="project" value="TAIR"/>
</dbReference>
<dbReference type="GO" id="GO:0010155">
    <property type="term" value="P:regulation of proton transport"/>
    <property type="evidence" value="ECO:0000314"/>
    <property type="project" value="UniProtKB"/>
</dbReference>
<dbReference type="InterPro" id="IPR055282">
    <property type="entry name" value="PPI1-4"/>
</dbReference>
<dbReference type="PANTHER" id="PTHR32219:SF2">
    <property type="entry name" value="PROTON PUMP-INTERACTOR 1"/>
    <property type="match status" value="1"/>
</dbReference>
<dbReference type="PANTHER" id="PTHR32219">
    <property type="entry name" value="RNA-BINDING PROTEIN YLMH-RELATED"/>
    <property type="match status" value="1"/>
</dbReference>
<gene>
    <name type="primary">PPI1</name>
    <name type="ordered locus">At4g27500</name>
    <name type="ORF">F27G19.100</name>
</gene>
<reference key="1">
    <citation type="journal article" date="2002" name="Plant J.">
        <title>A novel interaction partner for the C-terminus of Arabidopsis thaliana plasma membrane H+-ATPase (AHA1 isoform): site and mechanism of action on H+-ATPase activity differ from those of 14-3-3 proteins.</title>
        <authorList>
            <person name="Morandini P."/>
            <person name="Valera M."/>
            <person name="Albumi C."/>
            <person name="Bonza M.C."/>
            <person name="Giacometti S."/>
            <person name="Ravera G."/>
            <person name="Murgia I."/>
            <person name="Soave C."/>
            <person name="De Michelis M.I."/>
        </authorList>
    </citation>
    <scope>NUCLEOTIDE SEQUENCE [MRNA]</scope>
    <scope>FUNCTION</scope>
    <scope>INTERACTION WITH AHA1</scope>
    <scope>GENE FAMILY</scope>
    <scope>NOMENCLATURE</scope>
    <source>
        <strain>cv. Landsberg erecta</strain>
        <tissue>Leaf</tissue>
        <tissue>Root</tissue>
    </source>
</reference>
<reference key="2">
    <citation type="journal article" date="1999" name="Nature">
        <title>Sequence and analysis of chromosome 4 of the plant Arabidopsis thaliana.</title>
        <authorList>
            <person name="Mayer K.F.X."/>
            <person name="Schueller C."/>
            <person name="Wambutt R."/>
            <person name="Murphy G."/>
            <person name="Volckaert G."/>
            <person name="Pohl T."/>
            <person name="Duesterhoeft A."/>
            <person name="Stiekema W."/>
            <person name="Entian K.-D."/>
            <person name="Terryn N."/>
            <person name="Harris B."/>
            <person name="Ansorge W."/>
            <person name="Brandt P."/>
            <person name="Grivell L.A."/>
            <person name="Rieger M."/>
            <person name="Weichselgartner M."/>
            <person name="de Simone V."/>
            <person name="Obermaier B."/>
            <person name="Mache R."/>
            <person name="Mueller M."/>
            <person name="Kreis M."/>
            <person name="Delseny M."/>
            <person name="Puigdomenech P."/>
            <person name="Watson M."/>
            <person name="Schmidtheini T."/>
            <person name="Reichert B."/>
            <person name="Portetelle D."/>
            <person name="Perez-Alonso M."/>
            <person name="Boutry M."/>
            <person name="Bancroft I."/>
            <person name="Vos P."/>
            <person name="Hoheisel J."/>
            <person name="Zimmermann W."/>
            <person name="Wedler H."/>
            <person name="Ridley P."/>
            <person name="Langham S.-A."/>
            <person name="McCullagh B."/>
            <person name="Bilham L."/>
            <person name="Robben J."/>
            <person name="van der Schueren J."/>
            <person name="Grymonprez B."/>
            <person name="Chuang Y.-J."/>
            <person name="Vandenbussche F."/>
            <person name="Braeken M."/>
            <person name="Weltjens I."/>
            <person name="Voet M."/>
            <person name="Bastiaens I."/>
            <person name="Aert R."/>
            <person name="Defoor E."/>
            <person name="Weitzenegger T."/>
            <person name="Bothe G."/>
            <person name="Ramsperger U."/>
            <person name="Hilbert H."/>
            <person name="Braun M."/>
            <person name="Holzer E."/>
            <person name="Brandt A."/>
            <person name="Peters S."/>
            <person name="van Staveren M."/>
            <person name="Dirkse W."/>
            <person name="Mooijman P."/>
            <person name="Klein Lankhorst R."/>
            <person name="Rose M."/>
            <person name="Hauf J."/>
            <person name="Koetter P."/>
            <person name="Berneiser S."/>
            <person name="Hempel S."/>
            <person name="Feldpausch M."/>
            <person name="Lamberth S."/>
            <person name="Van den Daele H."/>
            <person name="De Keyser A."/>
            <person name="Buysshaert C."/>
            <person name="Gielen J."/>
            <person name="Villarroel R."/>
            <person name="De Clercq R."/>
            <person name="van Montagu M."/>
            <person name="Rogers J."/>
            <person name="Cronin A."/>
            <person name="Quail M.A."/>
            <person name="Bray-Allen S."/>
            <person name="Clark L."/>
            <person name="Doggett J."/>
            <person name="Hall S."/>
            <person name="Kay M."/>
            <person name="Lennard N."/>
            <person name="McLay K."/>
            <person name="Mayes R."/>
            <person name="Pettett A."/>
            <person name="Rajandream M.A."/>
            <person name="Lyne M."/>
            <person name="Benes V."/>
            <person name="Rechmann S."/>
            <person name="Borkova D."/>
            <person name="Bloecker H."/>
            <person name="Scharfe M."/>
            <person name="Grimm M."/>
            <person name="Loehnert T.-H."/>
            <person name="Dose S."/>
            <person name="de Haan M."/>
            <person name="Maarse A.C."/>
            <person name="Schaefer M."/>
            <person name="Mueller-Auer S."/>
            <person name="Gabel C."/>
            <person name="Fuchs M."/>
            <person name="Fartmann B."/>
            <person name="Granderath K."/>
            <person name="Dauner D."/>
            <person name="Herzl A."/>
            <person name="Neumann S."/>
            <person name="Argiriou A."/>
            <person name="Vitale D."/>
            <person name="Liguori R."/>
            <person name="Piravandi E."/>
            <person name="Massenet O."/>
            <person name="Quigley F."/>
            <person name="Clabauld G."/>
            <person name="Muendlein A."/>
            <person name="Felber R."/>
            <person name="Schnabl S."/>
            <person name="Hiller R."/>
            <person name="Schmidt W."/>
            <person name="Lecharny A."/>
            <person name="Aubourg S."/>
            <person name="Chefdor F."/>
            <person name="Cooke R."/>
            <person name="Berger C."/>
            <person name="Monfort A."/>
            <person name="Casacuberta E."/>
            <person name="Gibbons T."/>
            <person name="Weber N."/>
            <person name="Vandenbol M."/>
            <person name="Bargues M."/>
            <person name="Terol J."/>
            <person name="Torres A."/>
            <person name="Perez-Perez A."/>
            <person name="Purnelle B."/>
            <person name="Bent E."/>
            <person name="Johnson S."/>
            <person name="Tacon D."/>
            <person name="Jesse T."/>
            <person name="Heijnen L."/>
            <person name="Schwarz S."/>
            <person name="Scholler P."/>
            <person name="Heber S."/>
            <person name="Francs P."/>
            <person name="Bielke C."/>
            <person name="Frishman D."/>
            <person name="Haase D."/>
            <person name="Lemcke K."/>
            <person name="Mewes H.-W."/>
            <person name="Stocker S."/>
            <person name="Zaccaria P."/>
            <person name="Bevan M."/>
            <person name="Wilson R.K."/>
            <person name="de la Bastide M."/>
            <person name="Habermann K."/>
            <person name="Parnell L."/>
            <person name="Dedhia N."/>
            <person name="Gnoj L."/>
            <person name="Schutz K."/>
            <person name="Huang E."/>
            <person name="Spiegel L."/>
            <person name="Sekhon M."/>
            <person name="Murray J."/>
            <person name="Sheet P."/>
            <person name="Cordes M."/>
            <person name="Abu-Threideh J."/>
            <person name="Stoneking T."/>
            <person name="Kalicki J."/>
            <person name="Graves T."/>
            <person name="Harmon G."/>
            <person name="Edwards J."/>
            <person name="Latreille P."/>
            <person name="Courtney L."/>
            <person name="Cloud J."/>
            <person name="Abbott A."/>
            <person name="Scott K."/>
            <person name="Johnson D."/>
            <person name="Minx P."/>
            <person name="Bentley D."/>
            <person name="Fulton B."/>
            <person name="Miller N."/>
            <person name="Greco T."/>
            <person name="Kemp K."/>
            <person name="Kramer J."/>
            <person name="Fulton L."/>
            <person name="Mardis E."/>
            <person name="Dante M."/>
            <person name="Pepin K."/>
            <person name="Hillier L.W."/>
            <person name="Nelson J."/>
            <person name="Spieth J."/>
            <person name="Ryan E."/>
            <person name="Andrews S."/>
            <person name="Geisel C."/>
            <person name="Layman D."/>
            <person name="Du H."/>
            <person name="Ali J."/>
            <person name="Berghoff A."/>
            <person name="Jones K."/>
            <person name="Drone K."/>
            <person name="Cotton M."/>
            <person name="Joshu C."/>
            <person name="Antonoiu B."/>
            <person name="Zidanic M."/>
            <person name="Strong C."/>
            <person name="Sun H."/>
            <person name="Lamar B."/>
            <person name="Yordan C."/>
            <person name="Ma P."/>
            <person name="Zhong J."/>
            <person name="Preston R."/>
            <person name="Vil D."/>
            <person name="Shekher M."/>
            <person name="Matero A."/>
            <person name="Shah R."/>
            <person name="Swaby I.K."/>
            <person name="O'Shaughnessy A."/>
            <person name="Rodriguez M."/>
            <person name="Hoffman J."/>
            <person name="Till S."/>
            <person name="Granat S."/>
            <person name="Shohdy N."/>
            <person name="Hasegawa A."/>
            <person name="Hameed A."/>
            <person name="Lodhi M."/>
            <person name="Johnson A."/>
            <person name="Chen E."/>
            <person name="Marra M.A."/>
            <person name="Martienssen R."/>
            <person name="McCombie W.R."/>
        </authorList>
    </citation>
    <scope>NUCLEOTIDE SEQUENCE [LARGE SCALE GENOMIC DNA]</scope>
    <source>
        <strain>cv. Columbia</strain>
    </source>
</reference>
<reference key="3">
    <citation type="journal article" date="2017" name="Plant J.">
        <title>Araport11: a complete reannotation of the Arabidopsis thaliana reference genome.</title>
        <authorList>
            <person name="Cheng C.Y."/>
            <person name="Krishnakumar V."/>
            <person name="Chan A.P."/>
            <person name="Thibaud-Nissen F."/>
            <person name="Schobel S."/>
            <person name="Town C.D."/>
        </authorList>
    </citation>
    <scope>GENOME REANNOTATION</scope>
    <source>
        <strain>cv. Columbia</strain>
    </source>
</reference>
<reference key="4">
    <citation type="journal article" date="2003" name="Science">
        <title>Empirical analysis of transcriptional activity in the Arabidopsis genome.</title>
        <authorList>
            <person name="Yamada K."/>
            <person name="Lim J."/>
            <person name="Dale J.M."/>
            <person name="Chen H."/>
            <person name="Shinn P."/>
            <person name="Palm C.J."/>
            <person name="Southwick A.M."/>
            <person name="Wu H.C."/>
            <person name="Kim C.J."/>
            <person name="Nguyen M."/>
            <person name="Pham P.K."/>
            <person name="Cheuk R.F."/>
            <person name="Karlin-Newmann G."/>
            <person name="Liu S.X."/>
            <person name="Lam B."/>
            <person name="Sakano H."/>
            <person name="Wu T."/>
            <person name="Yu G."/>
            <person name="Miranda M."/>
            <person name="Quach H.L."/>
            <person name="Tripp M."/>
            <person name="Chang C.H."/>
            <person name="Lee J.M."/>
            <person name="Toriumi M.J."/>
            <person name="Chan M.M."/>
            <person name="Tang C.C."/>
            <person name="Onodera C.S."/>
            <person name="Deng J.M."/>
            <person name="Akiyama K."/>
            <person name="Ansari Y."/>
            <person name="Arakawa T."/>
            <person name="Banh J."/>
            <person name="Banno F."/>
            <person name="Bowser L."/>
            <person name="Brooks S.Y."/>
            <person name="Carninci P."/>
            <person name="Chao Q."/>
            <person name="Choy N."/>
            <person name="Enju A."/>
            <person name="Goldsmith A.D."/>
            <person name="Gurjal M."/>
            <person name="Hansen N.F."/>
            <person name="Hayashizaki Y."/>
            <person name="Johnson-Hopson C."/>
            <person name="Hsuan V.W."/>
            <person name="Iida K."/>
            <person name="Karnes M."/>
            <person name="Khan S."/>
            <person name="Koesema E."/>
            <person name="Ishida J."/>
            <person name="Jiang P.X."/>
            <person name="Jones T."/>
            <person name="Kawai J."/>
            <person name="Kamiya A."/>
            <person name="Meyers C."/>
            <person name="Nakajima M."/>
            <person name="Narusaka M."/>
            <person name="Seki M."/>
            <person name="Sakurai T."/>
            <person name="Satou M."/>
            <person name="Tamse R."/>
            <person name="Vaysberg M."/>
            <person name="Wallender E.K."/>
            <person name="Wong C."/>
            <person name="Yamamura Y."/>
            <person name="Yuan S."/>
            <person name="Shinozaki K."/>
            <person name="Davis R.W."/>
            <person name="Theologis A."/>
            <person name="Ecker J.R."/>
        </authorList>
    </citation>
    <scope>NUCLEOTIDE SEQUENCE [LARGE SCALE MRNA]</scope>
    <source>
        <strain>cv. Columbia</strain>
    </source>
</reference>
<reference key="5">
    <citation type="journal article" date="2009" name="DNA Res.">
        <title>Analysis of multiple occurrences of alternative splicing events in Arabidopsis thaliana using novel sequenced full-length cDNAs.</title>
        <authorList>
            <person name="Iida K."/>
            <person name="Fukami-Kobayashi K."/>
            <person name="Toyoda A."/>
            <person name="Sakaki Y."/>
            <person name="Kobayashi M."/>
            <person name="Seki M."/>
            <person name="Shinozaki K."/>
        </authorList>
    </citation>
    <scope>NUCLEOTIDE SEQUENCE [LARGE SCALE MRNA] OF 1-510</scope>
    <source>
        <strain>cv. Columbia</strain>
        <tissue>Rosette leaf</tissue>
    </source>
</reference>
<reference key="6">
    <citation type="journal article" date="2005" name="FEBS J.">
        <title>Characterization of the interaction between the plasma membrane H-ATPase of Arabidopsis thaliana and a novel interactor (PPI1).</title>
        <authorList>
            <person name="Viotti C."/>
            <person name="Luoni L."/>
            <person name="Morandini P."/>
            <person name="De Michelis M.I."/>
        </authorList>
    </citation>
    <scope>FUNCTION</scope>
    <scope>INTERACTION WITH AHA1</scope>
</reference>
<reference key="7">
    <citation type="journal article" date="2008" name="Plant Biol.">
        <title>The proton pump interactor (Ppi) gene family of Arabidopsis thaliana: expression pattern of Ppi1 and characterisation of knockout mutants for Ppi1 and 2.</title>
        <authorList>
            <person name="Anzi C."/>
            <person name="Pelucchi P."/>
            <person name="Vazzola V."/>
            <person name="Murgia I."/>
            <person name="Gomarasca S."/>
            <person name="Piccoli M.B."/>
            <person name="Morandini P."/>
        </authorList>
    </citation>
    <scope>TISSUE SPECIFICITY</scope>
    <source>
        <strain>cv. Columbia</strain>
    </source>
</reference>
<reference key="8">
    <citation type="journal article" date="2009" name="Plant Biol.">
        <title>Intracellular localisation of PPI1 (proton pump interactor, isoform 1), a regulatory protein of the plasma membrane H(+)-ATPase of Arabidopsis thaliana.</title>
        <authorList>
            <person name="Bonza M.C."/>
            <person name="Fusca T."/>
            <person name="Homann U."/>
            <person name="Thiel G."/>
            <person name="De Michelis M.I."/>
        </authorList>
    </citation>
    <scope>SUBCELLULAR LOCATION</scope>
    <source>
        <strain>cv. Landsberg erecta</strain>
    </source>
</reference>
<reference key="9">
    <citation type="journal article" date="2009" name="Plant Physiol.">
        <title>Large-scale Arabidopsis phosphoproteome profiling reveals novel chloroplast kinase substrates and phosphorylation networks.</title>
        <authorList>
            <person name="Reiland S."/>
            <person name="Messerli G."/>
            <person name="Baerenfaller K."/>
            <person name="Gerrits B."/>
            <person name="Endler A."/>
            <person name="Grossmann J."/>
            <person name="Gruissem W."/>
            <person name="Baginsky S."/>
        </authorList>
    </citation>
    <scope>PHOSPHORYLATION [LARGE SCALE ANALYSIS] AT SER-540</scope>
    <scope>IDENTIFICATION BY MASS SPECTROMETRY [LARGE SCALE ANALYSIS]</scope>
</reference>
<proteinExistence type="evidence at protein level"/>
<evidence type="ECO:0000255" key="1"/>
<evidence type="ECO:0000256" key="2">
    <source>
        <dbReference type="SAM" id="MobiDB-lite"/>
    </source>
</evidence>
<evidence type="ECO:0000269" key="3">
    <source>
    </source>
</evidence>
<evidence type="ECO:0000269" key="4">
    <source>
    </source>
</evidence>
<evidence type="ECO:0000269" key="5">
    <source>
    </source>
</evidence>
<evidence type="ECO:0000269" key="6">
    <source>
    </source>
</evidence>
<evidence type="ECO:0000305" key="7"/>
<evidence type="ECO:0007744" key="8">
    <source>
    </source>
</evidence>
<organism>
    <name type="scientific">Arabidopsis thaliana</name>
    <name type="common">Mouse-ear cress</name>
    <dbReference type="NCBI Taxonomy" id="3702"/>
    <lineage>
        <taxon>Eukaryota</taxon>
        <taxon>Viridiplantae</taxon>
        <taxon>Streptophyta</taxon>
        <taxon>Embryophyta</taxon>
        <taxon>Tracheophyta</taxon>
        <taxon>Spermatophyta</taxon>
        <taxon>Magnoliopsida</taxon>
        <taxon>eudicotyledons</taxon>
        <taxon>Gunneridae</taxon>
        <taxon>Pentapetalae</taxon>
        <taxon>rosids</taxon>
        <taxon>malvids</taxon>
        <taxon>Brassicales</taxon>
        <taxon>Brassicaceae</taxon>
        <taxon>Camelineae</taxon>
        <taxon>Arabidopsis</taxon>
    </lineage>
</organism>
<name>PPI1_ARATH</name>
<protein>
    <recommendedName>
        <fullName>Proton pump-interactor 1</fullName>
    </recommendedName>
</protein>